<gene>
    <name evidence="1" type="primary">pdxA</name>
    <name type="ordered locus">PSPTO_0552</name>
</gene>
<evidence type="ECO:0000255" key="1">
    <source>
        <dbReference type="HAMAP-Rule" id="MF_00536"/>
    </source>
</evidence>
<name>PDXA_PSESM</name>
<keyword id="KW-0170">Cobalt</keyword>
<keyword id="KW-0963">Cytoplasm</keyword>
<keyword id="KW-0460">Magnesium</keyword>
<keyword id="KW-0479">Metal-binding</keyword>
<keyword id="KW-0520">NAD</keyword>
<keyword id="KW-0521">NADP</keyword>
<keyword id="KW-0560">Oxidoreductase</keyword>
<keyword id="KW-0664">Pyridoxine biosynthesis</keyword>
<keyword id="KW-1185">Reference proteome</keyword>
<keyword id="KW-0862">Zinc</keyword>
<proteinExistence type="inferred from homology"/>
<reference key="1">
    <citation type="journal article" date="2003" name="Proc. Natl. Acad. Sci. U.S.A.">
        <title>The complete genome sequence of the Arabidopsis and tomato pathogen Pseudomonas syringae pv. tomato DC3000.</title>
        <authorList>
            <person name="Buell C.R."/>
            <person name="Joardar V."/>
            <person name="Lindeberg M."/>
            <person name="Selengut J."/>
            <person name="Paulsen I.T."/>
            <person name="Gwinn M.L."/>
            <person name="Dodson R.J."/>
            <person name="DeBoy R.T."/>
            <person name="Durkin A.S."/>
            <person name="Kolonay J.F."/>
            <person name="Madupu R."/>
            <person name="Daugherty S.C."/>
            <person name="Brinkac L.M."/>
            <person name="Beanan M.J."/>
            <person name="Haft D.H."/>
            <person name="Nelson W.C."/>
            <person name="Davidsen T.M."/>
            <person name="Zafar N."/>
            <person name="Zhou L."/>
            <person name="Liu J."/>
            <person name="Yuan Q."/>
            <person name="Khouri H.M."/>
            <person name="Fedorova N.B."/>
            <person name="Tran B."/>
            <person name="Russell D."/>
            <person name="Berry K.J."/>
            <person name="Utterback T.R."/>
            <person name="Van Aken S.E."/>
            <person name="Feldblyum T.V."/>
            <person name="D'Ascenzo M."/>
            <person name="Deng W.-L."/>
            <person name="Ramos A.R."/>
            <person name="Alfano J.R."/>
            <person name="Cartinhour S."/>
            <person name="Chatterjee A.K."/>
            <person name="Delaney T.P."/>
            <person name="Lazarowitz S.G."/>
            <person name="Martin G.B."/>
            <person name="Schneider D.J."/>
            <person name="Tang X."/>
            <person name="Bender C.L."/>
            <person name="White O."/>
            <person name="Fraser C.M."/>
            <person name="Collmer A."/>
        </authorList>
    </citation>
    <scope>NUCLEOTIDE SEQUENCE [LARGE SCALE GENOMIC DNA]</scope>
    <source>
        <strain>ATCC BAA-871 / DC3000</strain>
    </source>
</reference>
<comment type="function">
    <text evidence="1">Catalyzes the NAD(P)-dependent oxidation of 4-(phosphooxy)-L-threonine (HTP) into 2-amino-3-oxo-4-(phosphooxy)butyric acid which spontaneously decarboxylates to form 3-amino-2-oxopropyl phosphate (AHAP).</text>
</comment>
<comment type="catalytic activity">
    <reaction evidence="1">
        <text>4-(phosphooxy)-L-threonine + NAD(+) = 3-amino-2-oxopropyl phosphate + CO2 + NADH</text>
        <dbReference type="Rhea" id="RHEA:32275"/>
        <dbReference type="ChEBI" id="CHEBI:16526"/>
        <dbReference type="ChEBI" id="CHEBI:57279"/>
        <dbReference type="ChEBI" id="CHEBI:57540"/>
        <dbReference type="ChEBI" id="CHEBI:57945"/>
        <dbReference type="ChEBI" id="CHEBI:58452"/>
        <dbReference type="EC" id="1.1.1.262"/>
    </reaction>
</comment>
<comment type="cofactor">
    <cofactor evidence="1">
        <name>Zn(2+)</name>
        <dbReference type="ChEBI" id="CHEBI:29105"/>
    </cofactor>
    <cofactor evidence="1">
        <name>Mg(2+)</name>
        <dbReference type="ChEBI" id="CHEBI:18420"/>
    </cofactor>
    <cofactor evidence="1">
        <name>Co(2+)</name>
        <dbReference type="ChEBI" id="CHEBI:48828"/>
    </cofactor>
    <text evidence="1">Binds 1 divalent metal cation per subunit. Can use ions such as Zn(2+), Mg(2+) or Co(2+).</text>
</comment>
<comment type="pathway">
    <text evidence="1">Cofactor biosynthesis; pyridoxine 5'-phosphate biosynthesis; pyridoxine 5'-phosphate from D-erythrose 4-phosphate: step 4/5.</text>
</comment>
<comment type="subunit">
    <text evidence="1">Homodimer.</text>
</comment>
<comment type="subcellular location">
    <subcellularLocation>
        <location evidence="1">Cytoplasm</location>
    </subcellularLocation>
</comment>
<comment type="miscellaneous">
    <text evidence="1">The active site is located at the dimer interface.</text>
</comment>
<comment type="similarity">
    <text evidence="1">Belongs to the PdxA family.</text>
</comment>
<dbReference type="EC" id="1.1.1.262" evidence="1"/>
<dbReference type="EMBL" id="AE016853">
    <property type="protein sequence ID" value="AAO54094.1"/>
    <property type="molecule type" value="Genomic_DNA"/>
</dbReference>
<dbReference type="RefSeq" id="NP_790399.1">
    <property type="nucleotide sequence ID" value="NC_004578.1"/>
</dbReference>
<dbReference type="RefSeq" id="WP_011103187.1">
    <property type="nucleotide sequence ID" value="NC_004578.1"/>
</dbReference>
<dbReference type="SMR" id="Q88A45"/>
<dbReference type="STRING" id="223283.PSPTO_0552"/>
<dbReference type="GeneID" id="1182162"/>
<dbReference type="KEGG" id="pst:PSPTO_0552"/>
<dbReference type="PATRIC" id="fig|223283.9.peg.562"/>
<dbReference type="eggNOG" id="COG1995">
    <property type="taxonomic scope" value="Bacteria"/>
</dbReference>
<dbReference type="HOGENOM" id="CLU_040168_2_0_6"/>
<dbReference type="OrthoDB" id="9801783at2"/>
<dbReference type="PhylomeDB" id="Q88A45"/>
<dbReference type="UniPathway" id="UPA00244">
    <property type="reaction ID" value="UER00312"/>
</dbReference>
<dbReference type="Proteomes" id="UP000002515">
    <property type="component" value="Chromosome"/>
</dbReference>
<dbReference type="GO" id="GO:0005737">
    <property type="term" value="C:cytoplasm"/>
    <property type="evidence" value="ECO:0007669"/>
    <property type="project" value="UniProtKB-SubCell"/>
</dbReference>
<dbReference type="GO" id="GO:0050570">
    <property type="term" value="F:4-hydroxythreonine-4-phosphate dehydrogenase activity"/>
    <property type="evidence" value="ECO:0007669"/>
    <property type="project" value="UniProtKB-UniRule"/>
</dbReference>
<dbReference type="GO" id="GO:0050897">
    <property type="term" value="F:cobalt ion binding"/>
    <property type="evidence" value="ECO:0007669"/>
    <property type="project" value="UniProtKB-UniRule"/>
</dbReference>
<dbReference type="GO" id="GO:0000287">
    <property type="term" value="F:magnesium ion binding"/>
    <property type="evidence" value="ECO:0007669"/>
    <property type="project" value="UniProtKB-UniRule"/>
</dbReference>
<dbReference type="GO" id="GO:0051287">
    <property type="term" value="F:NAD binding"/>
    <property type="evidence" value="ECO:0007669"/>
    <property type="project" value="InterPro"/>
</dbReference>
<dbReference type="GO" id="GO:0008270">
    <property type="term" value="F:zinc ion binding"/>
    <property type="evidence" value="ECO:0007669"/>
    <property type="project" value="UniProtKB-UniRule"/>
</dbReference>
<dbReference type="GO" id="GO:0042823">
    <property type="term" value="P:pyridoxal phosphate biosynthetic process"/>
    <property type="evidence" value="ECO:0007669"/>
    <property type="project" value="UniProtKB-UniRule"/>
</dbReference>
<dbReference type="GO" id="GO:0008615">
    <property type="term" value="P:pyridoxine biosynthetic process"/>
    <property type="evidence" value="ECO:0007669"/>
    <property type="project" value="UniProtKB-UniRule"/>
</dbReference>
<dbReference type="Gene3D" id="3.40.718.10">
    <property type="entry name" value="Isopropylmalate Dehydrogenase"/>
    <property type="match status" value="1"/>
</dbReference>
<dbReference type="HAMAP" id="MF_00536">
    <property type="entry name" value="PdxA"/>
    <property type="match status" value="1"/>
</dbReference>
<dbReference type="InterPro" id="IPR037510">
    <property type="entry name" value="PdxA"/>
</dbReference>
<dbReference type="InterPro" id="IPR005255">
    <property type="entry name" value="PdxA_fam"/>
</dbReference>
<dbReference type="NCBIfam" id="TIGR00557">
    <property type="entry name" value="pdxA"/>
    <property type="match status" value="1"/>
</dbReference>
<dbReference type="PANTHER" id="PTHR30004">
    <property type="entry name" value="4-HYDROXYTHREONINE-4-PHOSPHATE DEHYDROGENASE"/>
    <property type="match status" value="1"/>
</dbReference>
<dbReference type="PANTHER" id="PTHR30004:SF5">
    <property type="entry name" value="4-HYDROXYTHREONINE-4-PHOSPHATE DEHYDROGENASE"/>
    <property type="match status" value="1"/>
</dbReference>
<dbReference type="Pfam" id="PF04166">
    <property type="entry name" value="PdxA"/>
    <property type="match status" value="1"/>
</dbReference>
<dbReference type="SUPFAM" id="SSF53659">
    <property type="entry name" value="Isocitrate/Isopropylmalate dehydrogenase-like"/>
    <property type="match status" value="1"/>
</dbReference>
<sequence length="329" mass="35042">MKPKRFALTPGEPAGIGPDLCLLLATQPQPYPLIAITSRDLLTQRAAQLGVAVSLLDVTPETLPDQPAPAGSLYVWHTPLAAPVETGVLNKANAAFVLQTLTRAGQGCLDGLFSGMITAPVHKGVINDGGIAFSGHTEFLAELTHTEQVVMMLATGDLRVALVTTHLPLREVADAITADRLERVTRILHADLVNKFGIAHPRILVCGLNPHAGESGHLGREEIDIIEPTLERLRSEGLDLRGPLPADTLFTPKYLEHCDAVLAMYHDQGLPVLKYKGFGAAVNVTLGLPIIRTSVDHGTALDLAGSANIDTGSLRVALQTAYQMAETHS</sequence>
<protein>
    <recommendedName>
        <fullName evidence="1">4-hydroxythreonine-4-phosphate dehydrogenase</fullName>
        <ecNumber evidence="1">1.1.1.262</ecNumber>
    </recommendedName>
    <alternativeName>
        <fullName evidence="1">4-(phosphohydroxy)-L-threonine dehydrogenase</fullName>
    </alternativeName>
</protein>
<accession>Q88A45</accession>
<organism>
    <name type="scientific">Pseudomonas syringae pv. tomato (strain ATCC BAA-871 / DC3000)</name>
    <dbReference type="NCBI Taxonomy" id="223283"/>
    <lineage>
        <taxon>Bacteria</taxon>
        <taxon>Pseudomonadati</taxon>
        <taxon>Pseudomonadota</taxon>
        <taxon>Gammaproteobacteria</taxon>
        <taxon>Pseudomonadales</taxon>
        <taxon>Pseudomonadaceae</taxon>
        <taxon>Pseudomonas</taxon>
    </lineage>
</organism>
<feature type="chain" id="PRO_0000188818" description="4-hydroxythreonine-4-phosphate dehydrogenase">
    <location>
        <begin position="1"/>
        <end position="329"/>
    </location>
</feature>
<feature type="binding site" evidence="1">
    <location>
        <position position="136"/>
    </location>
    <ligand>
        <name>substrate</name>
    </ligand>
</feature>
<feature type="binding site" evidence="1">
    <location>
        <position position="137"/>
    </location>
    <ligand>
        <name>substrate</name>
    </ligand>
</feature>
<feature type="binding site" evidence="1">
    <location>
        <position position="166"/>
    </location>
    <ligand>
        <name>a divalent metal cation</name>
        <dbReference type="ChEBI" id="CHEBI:60240"/>
        <note>ligand shared between dimeric partners</note>
    </ligand>
</feature>
<feature type="binding site" evidence="1">
    <location>
        <position position="211"/>
    </location>
    <ligand>
        <name>a divalent metal cation</name>
        <dbReference type="ChEBI" id="CHEBI:60240"/>
        <note>ligand shared between dimeric partners</note>
    </ligand>
</feature>
<feature type="binding site" evidence="1">
    <location>
        <position position="266"/>
    </location>
    <ligand>
        <name>a divalent metal cation</name>
        <dbReference type="ChEBI" id="CHEBI:60240"/>
        <note>ligand shared between dimeric partners</note>
    </ligand>
</feature>
<feature type="binding site" evidence="1">
    <location>
        <position position="274"/>
    </location>
    <ligand>
        <name>substrate</name>
    </ligand>
</feature>
<feature type="binding site" evidence="1">
    <location>
        <position position="283"/>
    </location>
    <ligand>
        <name>substrate</name>
    </ligand>
</feature>
<feature type="binding site" evidence="1">
    <location>
        <position position="292"/>
    </location>
    <ligand>
        <name>substrate</name>
    </ligand>
</feature>